<keyword id="KW-0025">Alternative splicing</keyword>
<keyword id="KW-0067">ATP-binding</keyword>
<keyword id="KW-0276">Fatty acid metabolism</keyword>
<keyword id="KW-0436">Ligase</keyword>
<keyword id="KW-0443">Lipid metabolism</keyword>
<keyword id="KW-0547">Nucleotide-binding</keyword>
<keyword id="KW-0596">Phosphopantetheine</keyword>
<keyword id="KW-0597">Phosphoprotein</keyword>
<keyword id="KW-1267">Proteomics identification</keyword>
<keyword id="KW-1185">Reference proteome</keyword>
<feature type="chain" id="PRO_0000315803" description="Beta-alanine-activating enzyme">
    <location>
        <begin position="1"/>
        <end position="1098"/>
    </location>
</feature>
<feature type="domain" description="Carrier" evidence="3">
    <location>
        <begin position="553"/>
        <end position="630"/>
    </location>
</feature>
<feature type="binding site" evidence="1">
    <location>
        <begin position="198"/>
        <end position="206"/>
    </location>
    <ligand>
        <name>ATP</name>
        <dbReference type="ChEBI" id="CHEBI:30616"/>
    </ligand>
</feature>
<feature type="binding site" evidence="1">
    <location>
        <position position="428"/>
    </location>
    <ligand>
        <name>ATP</name>
        <dbReference type="ChEBI" id="CHEBI:30616"/>
    </ligand>
</feature>
<feature type="binding site" evidence="1">
    <location>
        <position position="442"/>
    </location>
    <ligand>
        <name>ATP</name>
        <dbReference type="ChEBI" id="CHEBI:30616"/>
    </ligand>
</feature>
<feature type="binding site" evidence="1">
    <location>
        <position position="527"/>
    </location>
    <ligand>
        <name>ATP</name>
        <dbReference type="ChEBI" id="CHEBI:30616"/>
    </ligand>
</feature>
<feature type="modified residue" description="O-(pantetheine 4'-phosphoryl)serine" evidence="3">
    <location>
        <position position="589"/>
    </location>
</feature>
<feature type="modified residue" description="Phosphoserine" evidence="12 13">
    <location>
        <position position="649"/>
    </location>
</feature>
<feature type="modified residue" description="Phosphoserine" evidence="13">
    <location>
        <position position="724"/>
    </location>
</feature>
<feature type="splice variant" id="VSP_030707" description="In isoform 2." evidence="10">
    <location>
        <begin position="1"/>
        <end position="100"/>
    </location>
</feature>
<feature type="splice variant" id="VSP_030710" description="In isoform 4." evidence="8">
    <original>CYNGLVYVLKSNSGEKYWMFTTEDAVK</original>
    <variation>LAVLYQWTNLFIPVYLTIRAKNIFWFP</variation>
    <location>
        <begin position="831"/>
        <end position="857"/>
    </location>
</feature>
<feature type="splice variant" id="VSP_030711" description="In isoform 3." evidence="8 9">
    <original>CYNGLVYVLKS</original>
    <variation>KFLNLRFVELN</variation>
    <location>
        <begin position="831"/>
        <end position="841"/>
    </location>
</feature>
<feature type="splice variant" id="VSP_030712" description="In isoform 3." evidence="8 9">
    <location>
        <begin position="842"/>
        <end position="1098"/>
    </location>
</feature>
<feature type="splice variant" id="VSP_030713" description="In isoform 4." evidence="8">
    <location>
        <begin position="858"/>
        <end position="1098"/>
    </location>
</feature>
<feature type="sequence variant" id="VAR_061008" description="In dbSNP:rs34543011." evidence="4">
    <original>I</original>
    <variation>V</variation>
    <location>
        <position position="61"/>
    </location>
</feature>
<feature type="sequence variant" id="VAR_061009" description="In dbSNP:rs34228795." evidence="4">
    <original>P</original>
    <variation>R</variation>
    <location>
        <position position="93"/>
    </location>
</feature>
<feature type="sequence variant" id="VAR_038309" description="In dbSNP:rs3796543.">
    <original>K</original>
    <variation>R</variation>
    <location>
        <position position="368"/>
    </location>
</feature>
<feature type="sequence variant" id="VAR_038310" description="In dbSNP:rs3796544." evidence="5 7">
    <original>A</original>
    <variation>V</variation>
    <location>
        <position position="747"/>
    </location>
</feature>
<feature type="sequence variant" id="VAR_038311" description="In dbSNP:rs3796545.">
    <original>V</original>
    <variation>I</variation>
    <location>
        <position position="774"/>
    </location>
</feature>
<feature type="sequence variant" id="VAR_038312" description="In dbSNP:rs12498340.">
    <original>T</original>
    <variation>A</variation>
    <location>
        <position position="865"/>
    </location>
</feature>
<feature type="sequence variant" id="VAR_038313" description="In dbSNP:rs8340." evidence="6">
    <original>Y</original>
    <variation>D</variation>
    <location>
        <position position="1030"/>
    </location>
</feature>
<feature type="sequence conflict" description="In Ref. 5; AAI41825/AAI42710." evidence="11" ref="5">
    <original>I</original>
    <variation>R</variation>
    <location>
        <position position="167"/>
    </location>
</feature>
<feature type="sequence conflict" description="In Ref. 3; CAH56130." evidence="11" ref="3">
    <original>T</original>
    <variation>A</variation>
    <location>
        <position position="309"/>
    </location>
</feature>
<feature type="sequence conflict" description="In Ref. 1; AAQ83120 and 3; CAH56482." evidence="11" ref="1 3">
    <original>D</original>
    <variation>G</variation>
    <location>
        <position position="428"/>
    </location>
</feature>
<feature type="sequence conflict" description="In Ref. 3; CAH56482." evidence="11" ref="3">
    <original>E</original>
    <variation>V</variation>
    <location>
        <position position="470"/>
    </location>
</feature>
<feature type="sequence conflict" description="In Ref. 3; CAH56482." evidence="11" ref="3">
    <original>K</original>
    <variation>Q</variation>
    <location>
        <position position="489"/>
    </location>
</feature>
<feature type="sequence conflict" description="In Ref. 3; CAH56482." evidence="11" ref="3">
    <original>F</original>
    <variation>L</variation>
    <location>
        <position position="498"/>
    </location>
</feature>
<protein>
    <recommendedName>
        <fullName evidence="2">Beta-alanine-activating enzyme</fullName>
        <ecNumber>6.2.1.-</ecNumber>
    </recommendedName>
    <alternativeName>
        <fullName>Acyl-CoA synthetase family member 4</fullName>
    </alternativeName>
    <alternativeName>
        <fullName>Protein NRPS998</fullName>
    </alternativeName>
</protein>
<proteinExistence type="evidence at protein level"/>
<name>ACSF4_HUMAN</name>
<evidence type="ECO:0000250" key="1"/>
<evidence type="ECO:0000250" key="2">
    <source>
        <dbReference type="UniProtKB" id="Q80WC9"/>
    </source>
</evidence>
<evidence type="ECO:0000255" key="3">
    <source>
        <dbReference type="PROSITE-ProRule" id="PRU00258"/>
    </source>
</evidence>
<evidence type="ECO:0000269" key="4">
    <source>
    </source>
</evidence>
<evidence type="ECO:0000269" key="5">
    <source>
    </source>
</evidence>
<evidence type="ECO:0000269" key="6">
    <source>
    </source>
</evidence>
<evidence type="ECO:0000269" key="7">
    <source ref="2"/>
</evidence>
<evidence type="ECO:0000303" key="8">
    <source>
    </source>
</evidence>
<evidence type="ECO:0000303" key="9">
    <source>
    </source>
</evidence>
<evidence type="ECO:0000303" key="10">
    <source ref="2"/>
</evidence>
<evidence type="ECO:0000305" key="11"/>
<evidence type="ECO:0007744" key="12">
    <source>
    </source>
</evidence>
<evidence type="ECO:0007744" key="13">
    <source>
    </source>
</evidence>
<organism>
    <name type="scientific">Homo sapiens</name>
    <name type="common">Human</name>
    <dbReference type="NCBI Taxonomy" id="9606"/>
    <lineage>
        <taxon>Eukaryota</taxon>
        <taxon>Metazoa</taxon>
        <taxon>Chordata</taxon>
        <taxon>Craniata</taxon>
        <taxon>Vertebrata</taxon>
        <taxon>Euteleostomi</taxon>
        <taxon>Mammalia</taxon>
        <taxon>Eutheria</taxon>
        <taxon>Euarchontoglires</taxon>
        <taxon>Primates</taxon>
        <taxon>Haplorrhini</taxon>
        <taxon>Catarrhini</taxon>
        <taxon>Hominidae</taxon>
        <taxon>Homo</taxon>
    </lineage>
</organism>
<reference key="1">
    <citation type="journal article" date="2005" name="Mol. Biol. Rep.">
        <title>Cloning and characterization of a novel human homolog of mouse U26, a putative PQQ-dependent AAS dehydrogenase.</title>
        <authorList>
            <person name="Wang L."/>
            <person name="Jil C."/>
            <person name="Xu Y."/>
            <person name="Xu J."/>
            <person name="Dai J."/>
            <person name="Wu Q."/>
            <person name="Wu M."/>
            <person name="Zou X."/>
            <person name="Sun L."/>
            <person name="Gu S."/>
            <person name="Xie Y."/>
            <person name="Mao Y."/>
        </authorList>
    </citation>
    <scope>NUCLEOTIDE SEQUENCE [MRNA] (ISOFORM 1)</scope>
    <scope>TISSUE SPECIFICITY</scope>
    <scope>VARIANT ASP-1030</scope>
    <source>
        <tissue>Fetal brain</tissue>
    </source>
</reference>
<reference key="2">
    <citation type="submission" date="2003-09" db="EMBL/GenBank/DDBJ databases">
        <title>Identification and preliminary characterization of a human protein with similarity to microbial peptide synthetases.</title>
        <authorList>
            <person name="Paliga K."/>
            <person name="Bauer K."/>
        </authorList>
    </citation>
    <scope>NUCLEOTIDE SEQUENCE [MRNA] (ISOFORMS 1 AND 2)</scope>
    <scope>VARIANT VAL-747</scope>
</reference>
<reference key="3">
    <citation type="journal article" date="2007" name="BMC Genomics">
        <title>The full-ORF clone resource of the German cDNA consortium.</title>
        <authorList>
            <person name="Bechtel S."/>
            <person name="Rosenfelder H."/>
            <person name="Duda A."/>
            <person name="Schmidt C.P."/>
            <person name="Ernst U."/>
            <person name="Wellenreuther R."/>
            <person name="Mehrle A."/>
            <person name="Schuster C."/>
            <person name="Bahr A."/>
            <person name="Bloecker H."/>
            <person name="Heubner D."/>
            <person name="Hoerlein A."/>
            <person name="Michel G."/>
            <person name="Wedler H."/>
            <person name="Koehrer K."/>
            <person name="Ottenwaelder B."/>
            <person name="Poustka A."/>
            <person name="Wiemann S."/>
            <person name="Schupp I."/>
        </authorList>
    </citation>
    <scope>NUCLEOTIDE SEQUENCE [LARGE SCALE MRNA] (ISOFORM 3)</scope>
    <scope>NUCLEOTIDE SEQUENCE [LARGE SCALE MRNA] OF 96-1098</scope>
    <source>
        <tissue>Liver</tissue>
        <tissue>Small intestine</tissue>
    </source>
</reference>
<reference key="4">
    <citation type="journal article" date="2005" name="Nature">
        <title>Generation and annotation of the DNA sequences of human chromosomes 2 and 4.</title>
        <authorList>
            <person name="Hillier L.W."/>
            <person name="Graves T.A."/>
            <person name="Fulton R.S."/>
            <person name="Fulton L.A."/>
            <person name="Pepin K.H."/>
            <person name="Minx P."/>
            <person name="Wagner-McPherson C."/>
            <person name="Layman D."/>
            <person name="Wylie K."/>
            <person name="Sekhon M."/>
            <person name="Becker M.C."/>
            <person name="Fewell G.A."/>
            <person name="Delehaunty K.D."/>
            <person name="Miner T.L."/>
            <person name="Nash W.E."/>
            <person name="Kremitzki C."/>
            <person name="Oddy L."/>
            <person name="Du H."/>
            <person name="Sun H."/>
            <person name="Bradshaw-Cordum H."/>
            <person name="Ali J."/>
            <person name="Carter J."/>
            <person name="Cordes M."/>
            <person name="Harris A."/>
            <person name="Isak A."/>
            <person name="van Brunt A."/>
            <person name="Nguyen C."/>
            <person name="Du F."/>
            <person name="Courtney L."/>
            <person name="Kalicki J."/>
            <person name="Ozersky P."/>
            <person name="Abbott S."/>
            <person name="Armstrong J."/>
            <person name="Belter E.A."/>
            <person name="Caruso L."/>
            <person name="Cedroni M."/>
            <person name="Cotton M."/>
            <person name="Davidson T."/>
            <person name="Desai A."/>
            <person name="Elliott G."/>
            <person name="Erb T."/>
            <person name="Fronick C."/>
            <person name="Gaige T."/>
            <person name="Haakenson W."/>
            <person name="Haglund K."/>
            <person name="Holmes A."/>
            <person name="Harkins R."/>
            <person name="Kim K."/>
            <person name="Kruchowski S.S."/>
            <person name="Strong C.M."/>
            <person name="Grewal N."/>
            <person name="Goyea E."/>
            <person name="Hou S."/>
            <person name="Levy A."/>
            <person name="Martinka S."/>
            <person name="Mead K."/>
            <person name="McLellan M.D."/>
            <person name="Meyer R."/>
            <person name="Randall-Maher J."/>
            <person name="Tomlinson C."/>
            <person name="Dauphin-Kohlberg S."/>
            <person name="Kozlowicz-Reilly A."/>
            <person name="Shah N."/>
            <person name="Swearengen-Shahid S."/>
            <person name="Snider J."/>
            <person name="Strong J.T."/>
            <person name="Thompson J."/>
            <person name="Yoakum M."/>
            <person name="Leonard S."/>
            <person name="Pearman C."/>
            <person name="Trani L."/>
            <person name="Radionenko M."/>
            <person name="Waligorski J.E."/>
            <person name="Wang C."/>
            <person name="Rock S.M."/>
            <person name="Tin-Wollam A.-M."/>
            <person name="Maupin R."/>
            <person name="Latreille P."/>
            <person name="Wendl M.C."/>
            <person name="Yang S.-P."/>
            <person name="Pohl C."/>
            <person name="Wallis J.W."/>
            <person name="Spieth J."/>
            <person name="Bieri T.A."/>
            <person name="Berkowicz N."/>
            <person name="Nelson J.O."/>
            <person name="Osborne J."/>
            <person name="Ding L."/>
            <person name="Meyer R."/>
            <person name="Sabo A."/>
            <person name="Shotland Y."/>
            <person name="Sinha P."/>
            <person name="Wohldmann P.E."/>
            <person name="Cook L.L."/>
            <person name="Hickenbotham M.T."/>
            <person name="Eldred J."/>
            <person name="Williams D."/>
            <person name="Jones T.A."/>
            <person name="She X."/>
            <person name="Ciccarelli F.D."/>
            <person name="Izaurralde E."/>
            <person name="Taylor J."/>
            <person name="Schmutz J."/>
            <person name="Myers R.M."/>
            <person name="Cox D.R."/>
            <person name="Huang X."/>
            <person name="McPherson J.D."/>
            <person name="Mardis E.R."/>
            <person name="Clifton S.W."/>
            <person name="Warren W.C."/>
            <person name="Chinwalla A.T."/>
            <person name="Eddy S.R."/>
            <person name="Marra M.A."/>
            <person name="Ovcharenko I."/>
            <person name="Furey T.S."/>
            <person name="Miller W."/>
            <person name="Eichler E.E."/>
            <person name="Bork P."/>
            <person name="Suyama M."/>
            <person name="Torrents D."/>
            <person name="Waterston R.H."/>
            <person name="Wilson R.K."/>
        </authorList>
    </citation>
    <scope>NUCLEOTIDE SEQUENCE [LARGE SCALE GENOMIC DNA]</scope>
</reference>
<reference key="5">
    <citation type="journal article" date="2004" name="Genome Res.">
        <title>The status, quality, and expansion of the NIH full-length cDNA project: the Mammalian Gene Collection (MGC).</title>
        <authorList>
            <consortium name="The MGC Project Team"/>
        </authorList>
    </citation>
    <scope>NUCLEOTIDE SEQUENCE [LARGE SCALE MRNA] (ISOFORMS 3 AND 4)</scope>
    <scope>VARIANT VAL-747</scope>
</reference>
<reference key="6">
    <citation type="journal article" date="2000" name="Genome Res.">
        <title>Cloning and functional analysis of cDNAs with open reading frames for 300 previously undefined genes expressed in CD34+ hematopoietic stem/progenitor cells.</title>
        <authorList>
            <person name="Zhang Q.-H."/>
            <person name="Ye M."/>
            <person name="Wu X.-Y."/>
            <person name="Ren S.-X."/>
            <person name="Zhao M."/>
            <person name="Zhao C.-J."/>
            <person name="Fu G."/>
            <person name="Shen Y."/>
            <person name="Fan H.-Y."/>
            <person name="Lu G."/>
            <person name="Zhong M."/>
            <person name="Xu X.-R."/>
            <person name="Han Z.-G."/>
            <person name="Zhang J.-W."/>
            <person name="Tao J."/>
            <person name="Huang Q.-H."/>
            <person name="Zhou J."/>
            <person name="Hu G.-X."/>
            <person name="Gu J."/>
            <person name="Chen S.-J."/>
            <person name="Chen Z."/>
        </authorList>
    </citation>
    <scope>NUCLEOTIDE SEQUENCE [LARGE SCALE MRNA] OF 1-164</scope>
    <scope>VARIANTS VAL-61 AND ARG-93</scope>
    <source>
        <tissue>Umbilical cord blood</tissue>
    </source>
</reference>
<reference key="7">
    <citation type="journal article" date="2011" name="Sci. Signal.">
        <title>System-wide temporal characterization of the proteome and phosphoproteome of human embryonic stem cell differentiation.</title>
        <authorList>
            <person name="Rigbolt K.T."/>
            <person name="Prokhorova T.A."/>
            <person name="Akimov V."/>
            <person name="Henningsen J."/>
            <person name="Johansen P.T."/>
            <person name="Kratchmarova I."/>
            <person name="Kassem M."/>
            <person name="Mann M."/>
            <person name="Olsen J.V."/>
            <person name="Blagoev B."/>
        </authorList>
    </citation>
    <scope>PHOSPHORYLATION [LARGE SCALE ANALYSIS] AT SER-649</scope>
    <scope>IDENTIFICATION BY MASS SPECTROMETRY [LARGE SCALE ANALYSIS]</scope>
</reference>
<reference key="8">
    <citation type="journal article" date="2013" name="J. Proteome Res.">
        <title>Toward a comprehensive characterization of a human cancer cell phosphoproteome.</title>
        <authorList>
            <person name="Zhou H."/>
            <person name="Di Palma S."/>
            <person name="Preisinger C."/>
            <person name="Peng M."/>
            <person name="Polat A.N."/>
            <person name="Heck A.J."/>
            <person name="Mohammed S."/>
        </authorList>
    </citation>
    <scope>PHOSPHORYLATION [LARGE SCALE ANALYSIS] AT SER-649 AND SER-724</scope>
    <scope>IDENTIFICATION BY MASS SPECTROMETRY [LARGE SCALE ANALYSIS]</scope>
    <source>
        <tissue>Cervix carcinoma</tissue>
        <tissue>Erythroleukemia</tissue>
    </source>
</reference>
<gene>
    <name type="primary">AASDH</name>
    <name type="synonym">ACSF4</name>
    <name type="synonym">U26</name>
    <name type="ORF">HSPC318</name>
</gene>
<accession>Q4L235</accession>
<accession>A5D8V3</accession>
<accession>A5PL22</accession>
<accession>Q63HK2</accession>
<accession>Q63HR7</accession>
<accession>Q6IPP8</accession>
<accession>Q6TFZ6</accession>
<accession>Q7Z5Y3</accession>
<accession>Q96BW4</accession>
<accession>Q9P064</accession>
<sequence>MTLQELVHKAASCYMDRVAVCFDECNNQLPVYYTYKTVVNAASELSNFLLLHCDFQGIREIGLYCQPGIDLPSWILGILQVPAAYVPIEPDSPPSLSTHFMKKCNLKYILVEKKQINKFKSFHETLLNYDTFTVEHNDLVLFRLHWKNTEVNLMLNDGKEKYEKEKIKSISSEHVNEEKAEEHMDLRLKHCLAYVLHTSGTTGIPKIVRVPHKCIVPNIQHFRVLFDITQEDVLFLASPLTFDPSVVEIFLALSSGASLLIVPTSVKLLPSKLASVLFSHHRVTVLQATPTLLRRFGSQLIKSTVLSATTSLRVLALGGEAFPSLTVLRSWRGEGNKTQIFNVYGITEVSSWATIYRIPEKTLNSTLKCELPVQLGFPLLGTVVEVRDTNGFTIQEGSGQVFLGGRNRVCFLDDEVTVPLGTMRATGDFVTVKDGEIFFLGRKDSQIKRHGKRLNIELVQQVAEELQQVESCAVTWYNQEKLILFMVSKDASVKEYIFKELQKYLPSHAVPDELVLIDSLPFTSHGKIDVSELNKIYLNYINLKSENKLSGKEDLWEKLQYLWKSTLNLPEDLLRVPDESLFLNSGGDSLKSIRLLSEIEKLVGTSVPGLLEIILSSSILEIYNHILQTVVPDEDVTFRKSCATKRKLSDINQEEASGTSLHQKAIMTFTCHNEINAFVVLSRGSQILSLNSTRFLTKLGHCSSACPSDSVSQTNIQNLKGLNSPVLIGKSKDPSCVAKVSEEGKPAIGTQKMELHVRWRSDTGKCVDASPLVVIPTFDKSSTTVYIGSHSHRMKAVDFYSGKVKWEQILGDRIESSACVSKCGNFIVVGCYNGLVYVLKSNSGEKYWMFTTEDAVKSSATMDPTTGLIYIGSHDQHAYALDIYRKKCVWKSKCGGTVFSSPCLNLIPHHLYFATLGGLLLAVNPATGNVIWKHSCGKPLFSSPQCCSQYICIGCVDGNLLCFTHFGEQVWQFSTSGPIFSSPCTSPSEQKIFFGSHDCFIYCCNMKGHLQWKFETTSRVYATPFAFHNYNGSNEMLLAAASTDGKVWILESQSGQLQSVYELPGEVFSSPVVLESMLIIGCRDNYVYCLDLLGGNQK</sequence>
<comment type="function">
    <text evidence="2">Covalently binds beta-alanine in an ATP-dependent manner to form a thioester bond with its phosphopantetheine group and transfers it to an, as yet, unknown acceptor. May be required for a post-translational protein modification or for post-transcriptional modification of an RNA.</text>
</comment>
<comment type="alternative products">
    <event type="alternative splicing"/>
    <isoform>
        <id>Q4L235-1</id>
        <name>1</name>
        <sequence type="displayed"/>
    </isoform>
    <isoform>
        <id>Q4L235-2</id>
        <name>2</name>
        <sequence type="described" ref="VSP_030707"/>
    </isoform>
    <isoform>
        <id>Q4L235-3</id>
        <name>3</name>
        <sequence type="described" ref="VSP_030711 VSP_030712"/>
    </isoform>
    <isoform>
        <id>Q4L235-4</id>
        <name>4</name>
        <sequence type="described" ref="VSP_030710 VSP_030713"/>
    </isoform>
</comment>
<comment type="tissue specificity">
    <text evidence="6">Ubiquitously expressed in adult tissues.</text>
</comment>
<comment type="similarity">
    <text evidence="11">Belongs to the ATP-dependent AMP-binding enzyme family.</text>
</comment>
<comment type="sequence caution" evidence="11">
    <conflict type="erroneous initiation">
        <sequence resource="EMBL-CDS" id="CAH56482"/>
    </conflict>
    <text>Truncated N-terminus.</text>
</comment>
<dbReference type="EC" id="6.2.1.-"/>
<dbReference type="EMBL" id="AY314787">
    <property type="protein sequence ID" value="AAQ83120.1"/>
    <property type="molecule type" value="mRNA"/>
</dbReference>
<dbReference type="EMBL" id="AF516672">
    <property type="protein sequence ID" value="AAP76519.1"/>
    <property type="molecule type" value="mRNA"/>
</dbReference>
<dbReference type="EMBL" id="AY422212">
    <property type="protein sequence ID" value="AAR31184.1"/>
    <property type="molecule type" value="mRNA"/>
</dbReference>
<dbReference type="EMBL" id="BX640635">
    <property type="protein sequence ID" value="CAH56482.1"/>
    <property type="status" value="ALT_INIT"/>
    <property type="molecule type" value="Transcribed_RNA"/>
</dbReference>
<dbReference type="EMBL" id="BX648853">
    <property type="protein sequence ID" value="CAH56130.1"/>
    <property type="molecule type" value="mRNA"/>
</dbReference>
<dbReference type="EMBL" id="AC068620">
    <property type="status" value="NOT_ANNOTATED_CDS"/>
    <property type="molecule type" value="Genomic_DNA"/>
</dbReference>
<dbReference type="EMBL" id="BC071815">
    <property type="protein sequence ID" value="AAH71815.1"/>
    <property type="molecule type" value="mRNA"/>
</dbReference>
<dbReference type="EMBL" id="BC141824">
    <property type="protein sequence ID" value="AAI41825.1"/>
    <property type="molecule type" value="mRNA"/>
</dbReference>
<dbReference type="EMBL" id="BC142709">
    <property type="protein sequence ID" value="AAI42710.1"/>
    <property type="molecule type" value="mRNA"/>
</dbReference>
<dbReference type="EMBL" id="AF161436">
    <property type="protein sequence ID" value="AAF28996.1"/>
    <property type="molecule type" value="mRNA"/>
</dbReference>
<dbReference type="CCDS" id="CCDS3504.1">
    <molecule id="Q4L235-1"/>
</dbReference>
<dbReference type="CCDS" id="CCDS68705.1">
    <molecule id="Q4L235-2"/>
</dbReference>
<dbReference type="CCDS" id="CCDS68706.1">
    <molecule id="Q4L235-4"/>
</dbReference>
<dbReference type="CCDS" id="CCDS75127.1">
    <molecule id="Q4L235-3"/>
</dbReference>
<dbReference type="RefSeq" id="NP_001273597.1">
    <molecule id="Q4L235-2"/>
    <property type="nucleotide sequence ID" value="NM_001286668.2"/>
</dbReference>
<dbReference type="RefSeq" id="NP_001273598.1">
    <property type="nucleotide sequence ID" value="NM_001286669.1"/>
</dbReference>
<dbReference type="RefSeq" id="NP_001273599.1">
    <property type="nucleotide sequence ID" value="NM_001286670.1"/>
</dbReference>
<dbReference type="RefSeq" id="NP_001273600.1">
    <molecule id="Q4L235-4"/>
    <property type="nucleotide sequence ID" value="NM_001286671.2"/>
</dbReference>
<dbReference type="RefSeq" id="NP_001273601.1">
    <molecule id="Q4L235-3"/>
    <property type="nucleotide sequence ID" value="NM_001286672.2"/>
</dbReference>
<dbReference type="RefSeq" id="NP_001310819.1">
    <property type="nucleotide sequence ID" value="NM_001323890.1"/>
</dbReference>
<dbReference type="RefSeq" id="NP_001310821.1">
    <property type="nucleotide sequence ID" value="NM_001323892.1"/>
</dbReference>
<dbReference type="RefSeq" id="NP_001310822.1">
    <property type="nucleotide sequence ID" value="NM_001323893.1"/>
</dbReference>
<dbReference type="RefSeq" id="NP_001310828.1">
    <property type="nucleotide sequence ID" value="NM_001323899.1"/>
</dbReference>
<dbReference type="RefSeq" id="NP_861522.2">
    <molecule id="Q4L235-1"/>
    <property type="nucleotide sequence ID" value="NM_181806.3"/>
</dbReference>
<dbReference type="SMR" id="Q4L235"/>
<dbReference type="BioGRID" id="126342">
    <property type="interactions" value="13"/>
</dbReference>
<dbReference type="FunCoup" id="Q4L235">
    <property type="interactions" value="2187"/>
</dbReference>
<dbReference type="IntAct" id="Q4L235">
    <property type="interactions" value="7"/>
</dbReference>
<dbReference type="STRING" id="9606.ENSP00000205214"/>
<dbReference type="iPTMnet" id="Q4L235"/>
<dbReference type="PhosphoSitePlus" id="Q4L235"/>
<dbReference type="BioMuta" id="AASDH"/>
<dbReference type="DMDM" id="269849683"/>
<dbReference type="jPOST" id="Q4L235"/>
<dbReference type="MassIVE" id="Q4L235"/>
<dbReference type="PaxDb" id="9606-ENSP00000205214"/>
<dbReference type="PeptideAtlas" id="Q4L235"/>
<dbReference type="ProteomicsDB" id="62225">
    <molecule id="Q4L235-1"/>
</dbReference>
<dbReference type="ProteomicsDB" id="62226">
    <molecule id="Q4L235-2"/>
</dbReference>
<dbReference type="ProteomicsDB" id="62227">
    <molecule id="Q4L235-3"/>
</dbReference>
<dbReference type="ProteomicsDB" id="62228">
    <molecule id="Q4L235-4"/>
</dbReference>
<dbReference type="Pumba" id="Q4L235"/>
<dbReference type="Antibodypedia" id="24007">
    <property type="antibodies" value="56 antibodies from 15 providers"/>
</dbReference>
<dbReference type="DNASU" id="132949"/>
<dbReference type="Ensembl" id="ENST00000205214.11">
    <molecule id="Q4L235-1"/>
    <property type="protein sequence ID" value="ENSP00000205214.6"/>
    <property type="gene ID" value="ENSG00000157426.14"/>
</dbReference>
<dbReference type="Ensembl" id="ENST00000451613.5">
    <molecule id="Q4L235-4"/>
    <property type="protein sequence ID" value="ENSP00000409656.1"/>
    <property type="gene ID" value="ENSG00000157426.14"/>
</dbReference>
<dbReference type="Ensembl" id="ENST00000502617.1">
    <molecule id="Q4L235-3"/>
    <property type="protein sequence ID" value="ENSP00000421171.1"/>
    <property type="gene ID" value="ENSG00000157426.14"/>
</dbReference>
<dbReference type="Ensembl" id="ENST00000513376.5">
    <molecule id="Q4L235-2"/>
    <property type="protein sequence ID" value="ENSP00000423760.1"/>
    <property type="gene ID" value="ENSG00000157426.14"/>
</dbReference>
<dbReference type="GeneID" id="132949"/>
<dbReference type="KEGG" id="hsa:132949"/>
<dbReference type="MANE-Select" id="ENST00000205214.11">
    <property type="protein sequence ID" value="ENSP00000205214.6"/>
    <property type="RefSeq nucleotide sequence ID" value="NM_181806.4"/>
    <property type="RefSeq protein sequence ID" value="NP_861522.2"/>
</dbReference>
<dbReference type="UCSC" id="uc003hbn.5">
    <molecule id="Q4L235-1"/>
    <property type="organism name" value="human"/>
</dbReference>
<dbReference type="AGR" id="HGNC:23993"/>
<dbReference type="CTD" id="132949"/>
<dbReference type="DisGeNET" id="132949"/>
<dbReference type="GeneCards" id="AASDH"/>
<dbReference type="HGNC" id="HGNC:23993">
    <property type="gene designation" value="AASDH"/>
</dbReference>
<dbReference type="HPA" id="ENSG00000157426">
    <property type="expression patterns" value="Low tissue specificity"/>
</dbReference>
<dbReference type="MIM" id="614365">
    <property type="type" value="gene"/>
</dbReference>
<dbReference type="neXtProt" id="NX_Q4L235"/>
<dbReference type="OpenTargets" id="ENSG00000157426"/>
<dbReference type="PharmGKB" id="PA162375178"/>
<dbReference type="VEuPathDB" id="HostDB:ENSG00000157426"/>
<dbReference type="eggNOG" id="KOG1178">
    <property type="taxonomic scope" value="Eukaryota"/>
</dbReference>
<dbReference type="eggNOG" id="KOG4649">
    <property type="taxonomic scope" value="Eukaryota"/>
</dbReference>
<dbReference type="GeneTree" id="ENSGT00440000033811"/>
<dbReference type="InParanoid" id="Q4L235"/>
<dbReference type="OMA" id="NGNVICC"/>
<dbReference type="OrthoDB" id="408177at2759"/>
<dbReference type="PAN-GO" id="Q4L235">
    <property type="GO annotations" value="1 GO annotation based on evolutionary models"/>
</dbReference>
<dbReference type="PhylomeDB" id="Q4L235"/>
<dbReference type="TreeFam" id="TF314245"/>
<dbReference type="BRENDA" id="1.2.1.31">
    <property type="organism ID" value="2681"/>
</dbReference>
<dbReference type="PathwayCommons" id="Q4L235"/>
<dbReference type="SignaLink" id="Q4L235"/>
<dbReference type="BioGRID-ORCS" id="132949">
    <property type="hits" value="3 hits in 1153 CRISPR screens"/>
</dbReference>
<dbReference type="ChiTaRS" id="AASDH">
    <property type="organism name" value="human"/>
</dbReference>
<dbReference type="GenomeRNAi" id="132949"/>
<dbReference type="Pharos" id="Q4L235">
    <property type="development level" value="Tbio"/>
</dbReference>
<dbReference type="PRO" id="PR:Q4L235"/>
<dbReference type="Proteomes" id="UP000005640">
    <property type="component" value="Chromosome 4"/>
</dbReference>
<dbReference type="RNAct" id="Q4L235">
    <property type="molecule type" value="protein"/>
</dbReference>
<dbReference type="Bgee" id="ENSG00000157426">
    <property type="expression patterns" value="Expressed in kidney epithelium and 188 other cell types or tissues"/>
</dbReference>
<dbReference type="ExpressionAtlas" id="Q4L235">
    <property type="expression patterns" value="baseline and differential"/>
</dbReference>
<dbReference type="GO" id="GO:0016878">
    <property type="term" value="F:acid-thiol ligase activity"/>
    <property type="evidence" value="ECO:0000250"/>
    <property type="project" value="UniProtKB"/>
</dbReference>
<dbReference type="GO" id="GO:0005524">
    <property type="term" value="F:ATP binding"/>
    <property type="evidence" value="ECO:0007669"/>
    <property type="project" value="UniProtKB-KW"/>
</dbReference>
<dbReference type="GO" id="GO:0043041">
    <property type="term" value="P:amino acid activation for nonribosomal peptide biosynthetic process"/>
    <property type="evidence" value="ECO:0007669"/>
    <property type="project" value="Ensembl"/>
</dbReference>
<dbReference type="GO" id="GO:0019482">
    <property type="term" value="P:beta-alanine metabolic process"/>
    <property type="evidence" value="ECO:0007669"/>
    <property type="project" value="Ensembl"/>
</dbReference>
<dbReference type="GO" id="GO:0006631">
    <property type="term" value="P:fatty acid metabolic process"/>
    <property type="evidence" value="ECO:0000250"/>
    <property type="project" value="UniProtKB"/>
</dbReference>
<dbReference type="CDD" id="cd17654">
    <property type="entry name" value="A_NRPS_acs4"/>
    <property type="match status" value="1"/>
</dbReference>
<dbReference type="FunFam" id="3.40.50.12780:FF:000027">
    <property type="entry name" value="AASDH isoform 4"/>
    <property type="match status" value="1"/>
</dbReference>
<dbReference type="FunFam" id="3.30.300.30:FF:000014">
    <property type="entry name" value="acyl-CoA synthetase family member 4"/>
    <property type="match status" value="1"/>
</dbReference>
<dbReference type="FunFam" id="2.130.10.10:FF:001301">
    <property type="entry name" value="Beta-alanine-activating enzyme"/>
    <property type="match status" value="1"/>
</dbReference>
<dbReference type="Gene3D" id="3.30.300.30">
    <property type="match status" value="1"/>
</dbReference>
<dbReference type="Gene3D" id="3.40.50.12780">
    <property type="entry name" value="N-terminal domain of ligase-like"/>
    <property type="match status" value="1"/>
</dbReference>
<dbReference type="Gene3D" id="2.130.10.10">
    <property type="entry name" value="YVTN repeat-like/Quinoprotein amine dehydrogenase"/>
    <property type="match status" value="2"/>
</dbReference>
<dbReference type="InterPro" id="IPR048005">
    <property type="entry name" value="AASDH_AMP"/>
</dbReference>
<dbReference type="InterPro" id="IPR036736">
    <property type="entry name" value="ACP-like_sf"/>
</dbReference>
<dbReference type="InterPro" id="IPR045851">
    <property type="entry name" value="AMP-bd_C_sf"/>
</dbReference>
<dbReference type="InterPro" id="IPR020845">
    <property type="entry name" value="AMP-binding_CS"/>
</dbReference>
<dbReference type="InterPro" id="IPR000873">
    <property type="entry name" value="AMP-dep_synth/lig_dom"/>
</dbReference>
<dbReference type="InterPro" id="IPR042099">
    <property type="entry name" value="ANL_N_sf"/>
</dbReference>
<dbReference type="InterPro" id="IPR052091">
    <property type="entry name" value="Beta-ala_Activ/Resist"/>
</dbReference>
<dbReference type="InterPro" id="IPR009081">
    <property type="entry name" value="PP-bd_ACP"/>
</dbReference>
<dbReference type="InterPro" id="IPR018391">
    <property type="entry name" value="PQQ_b-propeller_rpt"/>
</dbReference>
<dbReference type="InterPro" id="IPR002372">
    <property type="entry name" value="PQQ_rpt_dom"/>
</dbReference>
<dbReference type="InterPro" id="IPR011047">
    <property type="entry name" value="Quinoprotein_ADH-like_sf"/>
</dbReference>
<dbReference type="InterPro" id="IPR015943">
    <property type="entry name" value="WD40/YVTN_repeat-like_dom_sf"/>
</dbReference>
<dbReference type="PANTHER" id="PTHR44394">
    <property type="entry name" value="BETA-ALANINE-ACTIVATING ENZYME"/>
    <property type="match status" value="1"/>
</dbReference>
<dbReference type="PANTHER" id="PTHR44394:SF1">
    <property type="entry name" value="BETA-ALANINE-ACTIVATING ENZYME"/>
    <property type="match status" value="1"/>
</dbReference>
<dbReference type="Pfam" id="PF00501">
    <property type="entry name" value="AMP-binding"/>
    <property type="match status" value="1"/>
</dbReference>
<dbReference type="Pfam" id="PF13570">
    <property type="entry name" value="Beta-prop_ACSF4"/>
    <property type="match status" value="1"/>
</dbReference>
<dbReference type="Pfam" id="PF00550">
    <property type="entry name" value="PP-binding"/>
    <property type="match status" value="1"/>
</dbReference>
<dbReference type="SMART" id="SM00564">
    <property type="entry name" value="PQQ"/>
    <property type="match status" value="6"/>
</dbReference>
<dbReference type="SUPFAM" id="SSF56801">
    <property type="entry name" value="Acetyl-CoA synthetase-like"/>
    <property type="match status" value="1"/>
</dbReference>
<dbReference type="SUPFAM" id="SSF47336">
    <property type="entry name" value="ACP-like"/>
    <property type="match status" value="1"/>
</dbReference>
<dbReference type="SUPFAM" id="SSF50998">
    <property type="entry name" value="Quinoprotein alcohol dehydrogenase-like"/>
    <property type="match status" value="1"/>
</dbReference>
<dbReference type="PROSITE" id="PS00455">
    <property type="entry name" value="AMP_BINDING"/>
    <property type="match status" value="1"/>
</dbReference>
<dbReference type="PROSITE" id="PS50075">
    <property type="entry name" value="CARRIER"/>
    <property type="match status" value="1"/>
</dbReference>